<organism>
    <name type="scientific">Cryptococcus neoformans var. neoformans serotype D (strain B-3501A)</name>
    <name type="common">Filobasidiella neoformans</name>
    <dbReference type="NCBI Taxonomy" id="283643"/>
    <lineage>
        <taxon>Eukaryota</taxon>
        <taxon>Fungi</taxon>
        <taxon>Dikarya</taxon>
        <taxon>Basidiomycota</taxon>
        <taxon>Agaricomycotina</taxon>
        <taxon>Tremellomycetes</taxon>
        <taxon>Tremellales</taxon>
        <taxon>Cryptococcaceae</taxon>
        <taxon>Cryptococcus</taxon>
        <taxon>Cryptococcus neoformans species complex</taxon>
    </lineage>
</organism>
<name>PTPA1_CRYNB</name>
<sequence length="362" mass="40468">MQPHTQPPQPEASSSRAVHIPSDPAPPRPCLTNDAIVSRWQSSPGFQYFWAWIKRRCDRLKGKEIIRGPFDHSAHGIRSLMNMLDQMTSWVEDATPQPQSNQRFGNLAFRTYNKLLQERLPPLIDSWDIPSNLRSQLLPLFINSHAFGHPTRLDYGTGHELAFVLGLWCCVVPGWVGGDNGTEEEEDELILRVFTRYLELTTFLQKTYNLEPAGSHGVWGLDDYCFLPYLFGSAQLLGSNLTPSASLSLALSHHPSATSPPSAPITDLYTLSLHHLTLFKFGASFSEHSPLLYSLSQMPNWVKPHGGLKKMFLGEVVGKRVVVQGIWVGGWCWGEDVPNVEERGDKNEGKGTDAGTKAPWAR</sequence>
<dbReference type="EC" id="5.2.1.8"/>
<dbReference type="EMBL" id="AAEY01000052">
    <property type="protein sequence ID" value="EAL18257.1"/>
    <property type="molecule type" value="Genomic_DNA"/>
</dbReference>
<dbReference type="RefSeq" id="XP_772904.1">
    <property type="nucleotide sequence ID" value="XM_767811.1"/>
</dbReference>
<dbReference type="SMR" id="P0CQ01"/>
<dbReference type="EnsemblFungi" id="AAW46120">
    <property type="protein sequence ID" value="AAW46120"/>
    <property type="gene ID" value="CNK00750"/>
</dbReference>
<dbReference type="GeneID" id="4938973"/>
<dbReference type="KEGG" id="cnb:CNBK2750"/>
<dbReference type="VEuPathDB" id="FungiDB:CNBK2750"/>
<dbReference type="HOGENOM" id="CLU_030733_1_0_1"/>
<dbReference type="OrthoDB" id="6370at5206"/>
<dbReference type="GO" id="GO:0005737">
    <property type="term" value="C:cytoplasm"/>
    <property type="evidence" value="ECO:0007669"/>
    <property type="project" value="UniProtKB-SubCell"/>
</dbReference>
<dbReference type="GO" id="GO:0005634">
    <property type="term" value="C:nucleus"/>
    <property type="evidence" value="ECO:0007669"/>
    <property type="project" value="UniProtKB-SubCell"/>
</dbReference>
<dbReference type="GO" id="GO:0000159">
    <property type="term" value="C:protein phosphatase type 2A complex"/>
    <property type="evidence" value="ECO:0007669"/>
    <property type="project" value="TreeGrafter"/>
</dbReference>
<dbReference type="GO" id="GO:0003755">
    <property type="term" value="F:peptidyl-prolyl cis-trans isomerase activity"/>
    <property type="evidence" value="ECO:0007669"/>
    <property type="project" value="UniProtKB-KW"/>
</dbReference>
<dbReference type="GO" id="GO:0008160">
    <property type="term" value="F:protein tyrosine phosphatase activator activity"/>
    <property type="evidence" value="ECO:0007669"/>
    <property type="project" value="TreeGrafter"/>
</dbReference>
<dbReference type="GO" id="GO:0007052">
    <property type="term" value="P:mitotic spindle organization"/>
    <property type="evidence" value="ECO:0007669"/>
    <property type="project" value="TreeGrafter"/>
</dbReference>
<dbReference type="CDD" id="cd04087">
    <property type="entry name" value="PTPA"/>
    <property type="match status" value="1"/>
</dbReference>
<dbReference type="Gene3D" id="1.20.120.1150">
    <property type="match status" value="1"/>
</dbReference>
<dbReference type="InterPro" id="IPR004327">
    <property type="entry name" value="Phstyr_phstse_ac"/>
</dbReference>
<dbReference type="InterPro" id="IPR043170">
    <property type="entry name" value="PTPA_C_lid"/>
</dbReference>
<dbReference type="InterPro" id="IPR037218">
    <property type="entry name" value="PTPA_sf"/>
</dbReference>
<dbReference type="PANTHER" id="PTHR10012">
    <property type="entry name" value="SERINE/THREONINE-PROTEIN PHOSPHATASE 2A REGULATORY SUBUNIT B"/>
    <property type="match status" value="1"/>
</dbReference>
<dbReference type="PANTHER" id="PTHR10012:SF5">
    <property type="entry name" value="SERINE_THREONINE-PROTEIN PHOSPHATASE 2A ACTIVATOR 2"/>
    <property type="match status" value="1"/>
</dbReference>
<dbReference type="Pfam" id="PF03095">
    <property type="entry name" value="PTPA"/>
    <property type="match status" value="1"/>
</dbReference>
<dbReference type="PIRSF" id="PIRSF016325">
    <property type="entry name" value="Phstyr_phstse_ac"/>
    <property type="match status" value="1"/>
</dbReference>
<dbReference type="SUPFAM" id="SSF140984">
    <property type="entry name" value="PTPA-like"/>
    <property type="match status" value="1"/>
</dbReference>
<keyword id="KW-0963">Cytoplasm</keyword>
<keyword id="KW-0413">Isomerase</keyword>
<keyword id="KW-0539">Nucleus</keyword>
<keyword id="KW-0697">Rotamase</keyword>
<gene>
    <name type="primary">RRD1</name>
    <name type="ordered locus">CNBK2750</name>
</gene>
<reference key="1">
    <citation type="journal article" date="2005" name="Science">
        <title>The genome of the basidiomycetous yeast and human pathogen Cryptococcus neoformans.</title>
        <authorList>
            <person name="Loftus B.J."/>
            <person name="Fung E."/>
            <person name="Roncaglia P."/>
            <person name="Rowley D."/>
            <person name="Amedeo P."/>
            <person name="Bruno D."/>
            <person name="Vamathevan J."/>
            <person name="Miranda M."/>
            <person name="Anderson I.J."/>
            <person name="Fraser J.A."/>
            <person name="Allen J.E."/>
            <person name="Bosdet I.E."/>
            <person name="Brent M.R."/>
            <person name="Chiu R."/>
            <person name="Doering T.L."/>
            <person name="Donlin M.J."/>
            <person name="D'Souza C.A."/>
            <person name="Fox D.S."/>
            <person name="Grinberg V."/>
            <person name="Fu J."/>
            <person name="Fukushima M."/>
            <person name="Haas B.J."/>
            <person name="Huang J.C."/>
            <person name="Janbon G."/>
            <person name="Jones S.J.M."/>
            <person name="Koo H.L."/>
            <person name="Krzywinski M.I."/>
            <person name="Kwon-Chung K.J."/>
            <person name="Lengeler K.B."/>
            <person name="Maiti R."/>
            <person name="Marra M.A."/>
            <person name="Marra R.E."/>
            <person name="Mathewson C.A."/>
            <person name="Mitchell T.G."/>
            <person name="Pertea M."/>
            <person name="Riggs F.R."/>
            <person name="Salzberg S.L."/>
            <person name="Schein J.E."/>
            <person name="Shvartsbeyn A."/>
            <person name="Shin H."/>
            <person name="Shumway M."/>
            <person name="Specht C.A."/>
            <person name="Suh B.B."/>
            <person name="Tenney A."/>
            <person name="Utterback T.R."/>
            <person name="Wickes B.L."/>
            <person name="Wortman J.R."/>
            <person name="Wye N.H."/>
            <person name="Kronstad J.W."/>
            <person name="Lodge J.K."/>
            <person name="Heitman J."/>
            <person name="Davis R.W."/>
            <person name="Fraser C.M."/>
            <person name="Hyman R.W."/>
        </authorList>
    </citation>
    <scope>NUCLEOTIDE SEQUENCE [LARGE SCALE GENOMIC DNA]</scope>
    <source>
        <strain>B-3501A</strain>
    </source>
</reference>
<protein>
    <recommendedName>
        <fullName>Serine/threonine-protein phosphatase 2A activator 1</fullName>
        <ecNumber>5.2.1.8</ecNumber>
    </recommendedName>
    <alternativeName>
        <fullName>Peptidyl-prolyl cis-trans isomerase PTPA-1</fullName>
        <shortName>PPIase PTPA-1</shortName>
        <shortName>Rotamase PTPA-1</shortName>
    </alternativeName>
    <alternativeName>
        <fullName>Phosphotyrosyl phosphatase activator 1</fullName>
    </alternativeName>
</protein>
<accession>P0CQ01</accession>
<accession>Q55JQ8</accession>
<accession>Q5K9U4</accession>
<feature type="chain" id="PRO_0000410210" description="Serine/threonine-protein phosphatase 2A activator 1">
    <location>
        <begin position="1"/>
        <end position="362"/>
    </location>
</feature>
<feature type="region of interest" description="Disordered" evidence="2">
    <location>
        <begin position="1"/>
        <end position="28"/>
    </location>
</feature>
<feature type="region of interest" description="Disordered" evidence="2">
    <location>
        <begin position="339"/>
        <end position="362"/>
    </location>
</feature>
<feature type="compositionally biased region" description="Pro residues" evidence="2">
    <location>
        <begin position="1"/>
        <end position="10"/>
    </location>
</feature>
<feature type="compositionally biased region" description="Basic and acidic residues" evidence="2">
    <location>
        <begin position="340"/>
        <end position="351"/>
    </location>
</feature>
<evidence type="ECO:0000250" key="1"/>
<evidence type="ECO:0000256" key="2">
    <source>
        <dbReference type="SAM" id="MobiDB-lite"/>
    </source>
</evidence>
<evidence type="ECO:0000305" key="3"/>
<comment type="function">
    <text evidence="1">PPIases accelerate the folding of proteins. It catalyzes the cis-trans isomerization of proline imidic peptide bonds in oligopeptides. Acts as a regulatory subunit for PP2A-like phosphatases modulating their activity or substrate specificity, probably by inducing a conformational change in the catalytic subunit, a direct target of the PPIase. Can reactivate inactive phosphatase PP2A-phosphatase methylesterase complexes (PP2Ai) in presence of ATP and Mg(2+) by dissociating the inactive form from the complex (By similarity).</text>
</comment>
<comment type="catalytic activity">
    <reaction>
        <text>[protein]-peptidylproline (omega=180) = [protein]-peptidylproline (omega=0)</text>
        <dbReference type="Rhea" id="RHEA:16237"/>
        <dbReference type="Rhea" id="RHEA-COMP:10747"/>
        <dbReference type="Rhea" id="RHEA-COMP:10748"/>
        <dbReference type="ChEBI" id="CHEBI:83833"/>
        <dbReference type="ChEBI" id="CHEBI:83834"/>
        <dbReference type="EC" id="5.2.1.8"/>
    </reaction>
</comment>
<comment type="subcellular location">
    <subcellularLocation>
        <location evidence="1">Cytoplasm</location>
    </subcellularLocation>
    <subcellularLocation>
        <location evidence="1">Nucleus</location>
    </subcellularLocation>
</comment>
<comment type="similarity">
    <text evidence="3">Belongs to the PTPA-type PPIase family.</text>
</comment>
<proteinExistence type="inferred from homology"/>